<keyword id="KW-0067">ATP-binding</keyword>
<keyword id="KW-0963">Cytoplasm</keyword>
<keyword id="KW-0418">Kinase</keyword>
<keyword id="KW-0545">Nucleotide biosynthesis</keyword>
<keyword id="KW-0547">Nucleotide-binding</keyword>
<keyword id="KW-1185">Reference proteome</keyword>
<keyword id="KW-0808">Transferase</keyword>
<dbReference type="EC" id="2.7.4.3" evidence="1"/>
<dbReference type="EMBL" id="BA000003">
    <property type="protein sequence ID" value="BAB13181.1"/>
    <property type="molecule type" value="Genomic_DNA"/>
</dbReference>
<dbReference type="RefSeq" id="NP_240295.1">
    <property type="nucleotide sequence ID" value="NC_002528.1"/>
</dbReference>
<dbReference type="RefSeq" id="WP_009874438.1">
    <property type="nucleotide sequence ID" value="NZ_AP036055.1"/>
</dbReference>
<dbReference type="SMR" id="P57556"/>
<dbReference type="STRING" id="563178.BUAP5A_477"/>
<dbReference type="EnsemblBacteria" id="BAB13181">
    <property type="protein sequence ID" value="BAB13181"/>
    <property type="gene ID" value="BAB13181"/>
</dbReference>
<dbReference type="KEGG" id="buc:BU484"/>
<dbReference type="PATRIC" id="fig|107806.10.peg.493"/>
<dbReference type="eggNOG" id="COG0563">
    <property type="taxonomic scope" value="Bacteria"/>
</dbReference>
<dbReference type="HOGENOM" id="CLU_032354_1_2_6"/>
<dbReference type="UniPathway" id="UPA00588">
    <property type="reaction ID" value="UER00649"/>
</dbReference>
<dbReference type="Proteomes" id="UP000001806">
    <property type="component" value="Chromosome"/>
</dbReference>
<dbReference type="GO" id="GO:0005737">
    <property type="term" value="C:cytoplasm"/>
    <property type="evidence" value="ECO:0007669"/>
    <property type="project" value="UniProtKB-SubCell"/>
</dbReference>
<dbReference type="GO" id="GO:0004017">
    <property type="term" value="F:adenylate kinase activity"/>
    <property type="evidence" value="ECO:0007669"/>
    <property type="project" value="UniProtKB-UniRule"/>
</dbReference>
<dbReference type="GO" id="GO:0005524">
    <property type="term" value="F:ATP binding"/>
    <property type="evidence" value="ECO:0007669"/>
    <property type="project" value="UniProtKB-UniRule"/>
</dbReference>
<dbReference type="GO" id="GO:0044209">
    <property type="term" value="P:AMP salvage"/>
    <property type="evidence" value="ECO:0007669"/>
    <property type="project" value="UniProtKB-UniRule"/>
</dbReference>
<dbReference type="CDD" id="cd01428">
    <property type="entry name" value="ADK"/>
    <property type="match status" value="1"/>
</dbReference>
<dbReference type="FunFam" id="3.40.50.300:FF:000106">
    <property type="entry name" value="Adenylate kinase mitochondrial"/>
    <property type="match status" value="1"/>
</dbReference>
<dbReference type="Gene3D" id="3.40.50.300">
    <property type="entry name" value="P-loop containing nucleotide triphosphate hydrolases"/>
    <property type="match status" value="1"/>
</dbReference>
<dbReference type="HAMAP" id="MF_00235">
    <property type="entry name" value="Adenylate_kinase_Adk"/>
    <property type="match status" value="1"/>
</dbReference>
<dbReference type="InterPro" id="IPR006259">
    <property type="entry name" value="Adenyl_kin_sub"/>
</dbReference>
<dbReference type="InterPro" id="IPR000850">
    <property type="entry name" value="Adenylat/UMP-CMP_kin"/>
</dbReference>
<dbReference type="InterPro" id="IPR033690">
    <property type="entry name" value="Adenylat_kinase_CS"/>
</dbReference>
<dbReference type="InterPro" id="IPR007862">
    <property type="entry name" value="Adenylate_kinase_lid-dom"/>
</dbReference>
<dbReference type="InterPro" id="IPR027417">
    <property type="entry name" value="P-loop_NTPase"/>
</dbReference>
<dbReference type="NCBIfam" id="TIGR01351">
    <property type="entry name" value="adk"/>
    <property type="match status" value="1"/>
</dbReference>
<dbReference type="NCBIfam" id="NF001379">
    <property type="entry name" value="PRK00279.1-1"/>
    <property type="match status" value="1"/>
</dbReference>
<dbReference type="NCBIfam" id="NF001381">
    <property type="entry name" value="PRK00279.1-3"/>
    <property type="match status" value="1"/>
</dbReference>
<dbReference type="PANTHER" id="PTHR23359">
    <property type="entry name" value="NUCLEOTIDE KINASE"/>
    <property type="match status" value="1"/>
</dbReference>
<dbReference type="Pfam" id="PF00406">
    <property type="entry name" value="ADK"/>
    <property type="match status" value="1"/>
</dbReference>
<dbReference type="Pfam" id="PF05191">
    <property type="entry name" value="ADK_lid"/>
    <property type="match status" value="1"/>
</dbReference>
<dbReference type="PRINTS" id="PR00094">
    <property type="entry name" value="ADENYLTKNASE"/>
</dbReference>
<dbReference type="SUPFAM" id="SSF52540">
    <property type="entry name" value="P-loop containing nucleoside triphosphate hydrolases"/>
    <property type="match status" value="1"/>
</dbReference>
<dbReference type="PROSITE" id="PS00113">
    <property type="entry name" value="ADENYLATE_KINASE"/>
    <property type="match status" value="1"/>
</dbReference>
<accession>P57556</accession>
<sequence length="215" mass="25045">MRIILLGAPGTGKGTQGKFITEKYKIPQISTGDMLRESVVLKNKIGMIIKNIIEEGKLVSDEIVCHLIKNRIKKHDCINGFILDGFPRTIQQALYLSKKNIKIDYVLEFIIPHEYILERISGRRIHIQSGRIYHVKFKPPKIKDKDDLTGQTLITRKDDTKEGIKKRLEEYKKVHDPLVQYYIHEKKRGNIKFFQIDAMLSFSSIRKKLETILKK</sequence>
<protein>
    <recommendedName>
        <fullName evidence="1">Adenylate kinase</fullName>
        <shortName evidence="1">AK</shortName>
        <ecNumber evidence="1">2.7.4.3</ecNumber>
    </recommendedName>
    <alternativeName>
        <fullName evidence="1">ATP-AMP transphosphorylase</fullName>
    </alternativeName>
    <alternativeName>
        <fullName evidence="1">ATP:AMP phosphotransferase</fullName>
    </alternativeName>
    <alternativeName>
        <fullName evidence="1">Adenylate monophosphate kinase</fullName>
    </alternativeName>
</protein>
<feature type="chain" id="PRO_0000158743" description="Adenylate kinase">
    <location>
        <begin position="1"/>
        <end position="215"/>
    </location>
</feature>
<feature type="region of interest" description="NMP" evidence="1">
    <location>
        <begin position="30"/>
        <end position="59"/>
    </location>
</feature>
<feature type="region of interest" description="LID">
    <location>
        <begin position="122"/>
        <end position="159"/>
    </location>
</feature>
<feature type="binding site" evidence="1">
    <location>
        <begin position="10"/>
        <end position="15"/>
    </location>
    <ligand>
        <name>ATP</name>
        <dbReference type="ChEBI" id="CHEBI:30616"/>
    </ligand>
</feature>
<feature type="binding site" evidence="1">
    <location>
        <position position="31"/>
    </location>
    <ligand>
        <name>AMP</name>
        <dbReference type="ChEBI" id="CHEBI:456215"/>
    </ligand>
</feature>
<feature type="binding site" evidence="1">
    <location>
        <position position="36"/>
    </location>
    <ligand>
        <name>AMP</name>
        <dbReference type="ChEBI" id="CHEBI:456215"/>
    </ligand>
</feature>
<feature type="binding site" evidence="1">
    <location>
        <begin position="57"/>
        <end position="59"/>
    </location>
    <ligand>
        <name>AMP</name>
        <dbReference type="ChEBI" id="CHEBI:456215"/>
    </ligand>
</feature>
<feature type="binding site" evidence="1">
    <location>
        <begin position="85"/>
        <end position="88"/>
    </location>
    <ligand>
        <name>AMP</name>
        <dbReference type="ChEBI" id="CHEBI:456215"/>
    </ligand>
</feature>
<feature type="binding site" evidence="1">
    <location>
        <position position="92"/>
    </location>
    <ligand>
        <name>AMP</name>
        <dbReference type="ChEBI" id="CHEBI:456215"/>
    </ligand>
</feature>
<feature type="binding site" evidence="1">
    <location>
        <position position="123"/>
    </location>
    <ligand>
        <name>ATP</name>
        <dbReference type="ChEBI" id="CHEBI:30616"/>
    </ligand>
</feature>
<feature type="binding site" evidence="1">
    <location>
        <begin position="132"/>
        <end position="133"/>
    </location>
    <ligand>
        <name>ATP</name>
        <dbReference type="ChEBI" id="CHEBI:30616"/>
    </ligand>
</feature>
<feature type="binding site" evidence="1">
    <location>
        <position position="156"/>
    </location>
    <ligand>
        <name>AMP</name>
        <dbReference type="ChEBI" id="CHEBI:456215"/>
    </ligand>
</feature>
<feature type="binding site" evidence="1">
    <location>
        <position position="167"/>
    </location>
    <ligand>
        <name>AMP</name>
        <dbReference type="ChEBI" id="CHEBI:456215"/>
    </ligand>
</feature>
<feature type="binding site" evidence="1">
    <location>
        <position position="200"/>
    </location>
    <ligand>
        <name>ATP</name>
        <dbReference type="ChEBI" id="CHEBI:30616"/>
    </ligand>
</feature>
<name>KAD_BUCAI</name>
<evidence type="ECO:0000255" key="1">
    <source>
        <dbReference type="HAMAP-Rule" id="MF_00235"/>
    </source>
</evidence>
<proteinExistence type="inferred from homology"/>
<organism>
    <name type="scientific">Buchnera aphidicola subsp. Acyrthosiphon pisum (strain APS)</name>
    <name type="common">Acyrthosiphon pisum symbiotic bacterium</name>
    <dbReference type="NCBI Taxonomy" id="107806"/>
    <lineage>
        <taxon>Bacteria</taxon>
        <taxon>Pseudomonadati</taxon>
        <taxon>Pseudomonadota</taxon>
        <taxon>Gammaproteobacteria</taxon>
        <taxon>Enterobacterales</taxon>
        <taxon>Erwiniaceae</taxon>
        <taxon>Buchnera</taxon>
    </lineage>
</organism>
<reference key="1">
    <citation type="journal article" date="2000" name="Nature">
        <title>Genome sequence of the endocellular bacterial symbiont of aphids Buchnera sp. APS.</title>
        <authorList>
            <person name="Shigenobu S."/>
            <person name="Watanabe H."/>
            <person name="Hattori M."/>
            <person name="Sakaki Y."/>
            <person name="Ishikawa H."/>
        </authorList>
    </citation>
    <scope>NUCLEOTIDE SEQUENCE [LARGE SCALE GENOMIC DNA]</scope>
    <source>
        <strain>APS</strain>
    </source>
</reference>
<gene>
    <name evidence="1" type="primary">adk</name>
    <name type="ordered locus">BU484</name>
</gene>
<comment type="function">
    <text evidence="1">Catalyzes the reversible transfer of the terminal phosphate group between ATP and AMP. Plays an important role in cellular energy homeostasis and in adenine nucleotide metabolism.</text>
</comment>
<comment type="catalytic activity">
    <reaction evidence="1">
        <text>AMP + ATP = 2 ADP</text>
        <dbReference type="Rhea" id="RHEA:12973"/>
        <dbReference type="ChEBI" id="CHEBI:30616"/>
        <dbReference type="ChEBI" id="CHEBI:456215"/>
        <dbReference type="ChEBI" id="CHEBI:456216"/>
        <dbReference type="EC" id="2.7.4.3"/>
    </reaction>
</comment>
<comment type="pathway">
    <text evidence="1">Purine metabolism; AMP biosynthesis via salvage pathway; AMP from ADP: step 1/1.</text>
</comment>
<comment type="subunit">
    <text evidence="1">Monomer.</text>
</comment>
<comment type="subcellular location">
    <subcellularLocation>
        <location evidence="1">Cytoplasm</location>
    </subcellularLocation>
</comment>
<comment type="domain">
    <text evidence="1">Consists of three domains, a large central CORE domain and two small peripheral domains, NMPbind and LID, which undergo movements during catalysis. The LID domain closes over the site of phosphoryl transfer upon ATP binding. Assembling and dissambling the active center during each catalytic cycle provides an effective means to prevent ATP hydrolysis.</text>
</comment>
<comment type="similarity">
    <text evidence="1">Belongs to the adenylate kinase family.</text>
</comment>